<protein>
    <recommendedName>
        <fullName>Ostricacin-2</fullName>
    </recommendedName>
    <alternativeName>
        <fullName>Beta-defensin 1</fullName>
    </alternativeName>
</protein>
<reference evidence="5" key="1">
    <citation type="journal article" date="2006" name="Int. J. Antimicrob. Agents">
        <title>Identification of three novel ostricacins: an update on the phylogenetic perspective of beta-defensins.</title>
        <authorList>
            <person name="Sugiarto H."/>
            <person name="Yu P.-L."/>
        </authorList>
    </citation>
    <scope>PROTEIN SEQUENCE</scope>
    <scope>FUNCTION</scope>
    <scope>MASS SPECTROMETRY</scope>
    <source>
        <tissue evidence="3">Blood</tissue>
    </source>
</reference>
<sequence length="41" mass="4689">APGNKAECEREKGYCGFLKCSFPFVVSGKCSRFFFCCKNIW</sequence>
<organism>
    <name type="scientific">Struthio camelus</name>
    <name type="common">Common ostrich</name>
    <dbReference type="NCBI Taxonomy" id="8801"/>
    <lineage>
        <taxon>Eukaryota</taxon>
        <taxon>Metazoa</taxon>
        <taxon>Chordata</taxon>
        <taxon>Craniata</taxon>
        <taxon>Vertebrata</taxon>
        <taxon>Euteleostomi</taxon>
        <taxon>Archelosauria</taxon>
        <taxon>Archosauria</taxon>
        <taxon>Dinosauria</taxon>
        <taxon>Saurischia</taxon>
        <taxon>Theropoda</taxon>
        <taxon>Coelurosauria</taxon>
        <taxon>Aves</taxon>
        <taxon>Palaeognathae</taxon>
        <taxon>Struthioniformes</taxon>
        <taxon>Struthionidae</taxon>
        <taxon>Struthio</taxon>
    </lineage>
</organism>
<comment type="function">
    <text evidence="3">Has antibacterial activity against the Gram-positive bacterium S.aureus 1056 MRSA (MIC=1.25 ug/ml) and the Gram-negative bacterium E.coli O157:H7 (MIC=0.96 ug/ml). Has antifungal activity against the yeast C.albicans 3153A (MIC=6.20 ug/ml).</text>
</comment>
<comment type="subcellular location">
    <subcellularLocation>
        <location>Secreted</location>
    </subcellularLocation>
</comment>
<comment type="mass spectrometry" mass="4704.9" method="MALDI" evidence="3"/>
<comment type="similarity">
    <text evidence="2">Belongs to the beta-defensin family.</text>
</comment>
<name>OSTR2_STRCA</name>
<feature type="peptide" id="PRO_0000284751" description="Ostricacin-2" evidence="3">
    <location>
        <begin position="1"/>
        <end position="41" status="greater than"/>
    </location>
</feature>
<feature type="disulfide bond" evidence="1">
    <location>
        <begin position="8"/>
        <end position="36"/>
    </location>
</feature>
<feature type="disulfide bond" evidence="1">
    <location>
        <begin position="15"/>
        <end position="30"/>
    </location>
</feature>
<feature type="disulfide bond" evidence="1">
    <location>
        <begin position="20"/>
        <end position="37"/>
    </location>
</feature>
<feature type="non-terminal residue" evidence="4">
    <location>
        <position position="41"/>
    </location>
</feature>
<evidence type="ECO:0000250" key="1">
    <source>
        <dbReference type="UniProtKB" id="P83430"/>
    </source>
</evidence>
<evidence type="ECO:0000255" key="2"/>
<evidence type="ECO:0000269" key="3">
    <source>
    </source>
</evidence>
<evidence type="ECO:0000303" key="4">
    <source>
    </source>
</evidence>
<evidence type="ECO:0000305" key="5"/>
<accession>P85114</accession>
<dbReference type="SMR" id="P85114"/>
<dbReference type="GO" id="GO:0005576">
    <property type="term" value="C:extracellular region"/>
    <property type="evidence" value="ECO:0007669"/>
    <property type="project" value="UniProtKB-SubCell"/>
</dbReference>
<dbReference type="GO" id="GO:0042742">
    <property type="term" value="P:defense response to bacterium"/>
    <property type="evidence" value="ECO:0007669"/>
    <property type="project" value="UniProtKB-KW"/>
</dbReference>
<dbReference type="GO" id="GO:0050832">
    <property type="term" value="P:defense response to fungus"/>
    <property type="evidence" value="ECO:0007669"/>
    <property type="project" value="UniProtKB-KW"/>
</dbReference>
<dbReference type="GO" id="GO:0031640">
    <property type="term" value="P:killing of cells of another organism"/>
    <property type="evidence" value="ECO:0007669"/>
    <property type="project" value="UniProtKB-KW"/>
</dbReference>
<dbReference type="InterPro" id="IPR001855">
    <property type="entry name" value="Defensin_beta-like"/>
</dbReference>
<dbReference type="Pfam" id="PF00711">
    <property type="entry name" value="Defensin_beta"/>
    <property type="match status" value="1"/>
</dbReference>
<dbReference type="SUPFAM" id="SSF57392">
    <property type="entry name" value="Defensin-like"/>
    <property type="match status" value="1"/>
</dbReference>
<proteinExistence type="evidence at protein level"/>
<keyword id="KW-0044">Antibiotic</keyword>
<keyword id="KW-0929">Antimicrobial</keyword>
<keyword id="KW-0211">Defensin</keyword>
<keyword id="KW-0903">Direct protein sequencing</keyword>
<keyword id="KW-1015">Disulfide bond</keyword>
<keyword id="KW-0295">Fungicide</keyword>
<keyword id="KW-0964">Secreted</keyword>